<sequence length="136" mass="15473">MFQSLIAIDYGKARIGISSGQMITKTATPIGTVEAYDGVPNWIELDKIIKCWNPSDIIIGLPLDTQNFETDITKSAKDFAKEVQQRYQRKVHLINEAYSTREARWRLEEVKSKKVSHIKVDALAACVILETWMSEN</sequence>
<reference key="1">
    <citation type="journal article" date="2007" name="PLoS ONE">
        <title>Genome sequencing shows that European isolates of Francisella tularensis subspecies tularensis are almost identical to US laboratory strain Schu S4.</title>
        <authorList>
            <person name="Chaudhuri R.R."/>
            <person name="Ren C.-P."/>
            <person name="Desmond L."/>
            <person name="Vincent G.A."/>
            <person name="Silman N.J."/>
            <person name="Brehm J.K."/>
            <person name="Elmore M.J."/>
            <person name="Hudson M.J."/>
            <person name="Forsman M."/>
            <person name="Isherwood K.E."/>
            <person name="Gurycova D."/>
            <person name="Minton N.P."/>
            <person name="Titball R.W."/>
            <person name="Pallen M.J."/>
            <person name="Vipond R."/>
        </authorList>
    </citation>
    <scope>NUCLEOTIDE SEQUENCE [LARGE SCALE GENOMIC DNA]</scope>
    <source>
        <strain>FSC 198</strain>
    </source>
</reference>
<accession>Q14HM0</accession>
<organism>
    <name type="scientific">Francisella tularensis subsp. tularensis (strain FSC 198)</name>
    <dbReference type="NCBI Taxonomy" id="393115"/>
    <lineage>
        <taxon>Bacteria</taxon>
        <taxon>Pseudomonadati</taxon>
        <taxon>Pseudomonadota</taxon>
        <taxon>Gammaproteobacteria</taxon>
        <taxon>Thiotrichales</taxon>
        <taxon>Francisellaceae</taxon>
        <taxon>Francisella</taxon>
    </lineage>
</organism>
<proteinExistence type="inferred from homology"/>
<evidence type="ECO:0000255" key="1">
    <source>
        <dbReference type="HAMAP-Rule" id="MF_00651"/>
    </source>
</evidence>
<keyword id="KW-0963">Cytoplasm</keyword>
<keyword id="KW-0378">Hydrolase</keyword>
<keyword id="KW-0540">Nuclease</keyword>
<keyword id="KW-0690">Ribosome biogenesis</keyword>
<comment type="function">
    <text evidence="1">Could be a nuclease involved in processing of the 5'-end of pre-16S rRNA.</text>
</comment>
<comment type="subcellular location">
    <subcellularLocation>
        <location evidence="1">Cytoplasm</location>
    </subcellularLocation>
</comment>
<comment type="similarity">
    <text evidence="1">Belongs to the YqgF nuclease family.</text>
</comment>
<gene>
    <name type="ordered locus">FTF0986</name>
</gene>
<feature type="chain" id="PRO_0000257536" description="Putative pre-16S rRNA nuclease">
    <location>
        <begin position="1"/>
        <end position="136"/>
    </location>
</feature>
<dbReference type="EC" id="3.1.-.-" evidence="1"/>
<dbReference type="EMBL" id="AM286280">
    <property type="protein sequence ID" value="CAL09002.1"/>
    <property type="molecule type" value="Genomic_DNA"/>
</dbReference>
<dbReference type="SMR" id="Q14HM0"/>
<dbReference type="KEGG" id="ftf:FTF0986"/>
<dbReference type="HOGENOM" id="CLU_098240_3_0_6"/>
<dbReference type="GO" id="GO:0005829">
    <property type="term" value="C:cytosol"/>
    <property type="evidence" value="ECO:0007669"/>
    <property type="project" value="TreeGrafter"/>
</dbReference>
<dbReference type="GO" id="GO:0004518">
    <property type="term" value="F:nuclease activity"/>
    <property type="evidence" value="ECO:0007669"/>
    <property type="project" value="UniProtKB-KW"/>
</dbReference>
<dbReference type="GO" id="GO:0000967">
    <property type="term" value="P:rRNA 5'-end processing"/>
    <property type="evidence" value="ECO:0007669"/>
    <property type="project" value="UniProtKB-UniRule"/>
</dbReference>
<dbReference type="CDD" id="cd16964">
    <property type="entry name" value="YqgF"/>
    <property type="match status" value="1"/>
</dbReference>
<dbReference type="Gene3D" id="3.30.420.140">
    <property type="entry name" value="YqgF/RNase H-like domain"/>
    <property type="match status" value="1"/>
</dbReference>
<dbReference type="HAMAP" id="MF_00651">
    <property type="entry name" value="Nuclease_YqgF"/>
    <property type="match status" value="1"/>
</dbReference>
<dbReference type="InterPro" id="IPR012337">
    <property type="entry name" value="RNaseH-like_sf"/>
</dbReference>
<dbReference type="InterPro" id="IPR005227">
    <property type="entry name" value="YqgF"/>
</dbReference>
<dbReference type="InterPro" id="IPR006641">
    <property type="entry name" value="YqgF/RNaseH-like_dom"/>
</dbReference>
<dbReference type="InterPro" id="IPR037027">
    <property type="entry name" value="YqgF/RNaseH-like_dom_sf"/>
</dbReference>
<dbReference type="NCBIfam" id="TIGR00250">
    <property type="entry name" value="RNAse_H_YqgF"/>
    <property type="match status" value="1"/>
</dbReference>
<dbReference type="PANTHER" id="PTHR33317">
    <property type="entry name" value="POLYNUCLEOTIDYL TRANSFERASE, RIBONUCLEASE H-LIKE SUPERFAMILY PROTEIN"/>
    <property type="match status" value="1"/>
</dbReference>
<dbReference type="PANTHER" id="PTHR33317:SF4">
    <property type="entry name" value="POLYNUCLEOTIDYL TRANSFERASE, RIBONUCLEASE H-LIKE SUPERFAMILY PROTEIN"/>
    <property type="match status" value="1"/>
</dbReference>
<dbReference type="Pfam" id="PF03652">
    <property type="entry name" value="RuvX"/>
    <property type="match status" value="1"/>
</dbReference>
<dbReference type="SMART" id="SM00732">
    <property type="entry name" value="YqgFc"/>
    <property type="match status" value="1"/>
</dbReference>
<dbReference type="SUPFAM" id="SSF53098">
    <property type="entry name" value="Ribonuclease H-like"/>
    <property type="match status" value="1"/>
</dbReference>
<protein>
    <recommendedName>
        <fullName evidence="1">Putative pre-16S rRNA nuclease</fullName>
        <ecNumber evidence="1">3.1.-.-</ecNumber>
    </recommendedName>
</protein>
<name>YQGF_FRAT1</name>